<proteinExistence type="inferred from homology"/>
<protein>
    <recommendedName>
        <fullName>Probable calcium-binding mitochondrial carrier CBG00135</fullName>
    </recommendedName>
</protein>
<dbReference type="EMBL" id="HE601409">
    <property type="protein sequence ID" value="CAP21634.1"/>
    <property type="molecule type" value="Genomic_DNA"/>
</dbReference>
<dbReference type="RefSeq" id="XP_002645256.1">
    <property type="nucleotide sequence ID" value="XM_002645210.1"/>
</dbReference>
<dbReference type="SMR" id="Q628Z2"/>
<dbReference type="FunCoup" id="Q628Z2">
    <property type="interactions" value="2385"/>
</dbReference>
<dbReference type="STRING" id="6238.Q628Z2"/>
<dbReference type="EnsemblMetazoa" id="CBG00135.1">
    <property type="protein sequence ID" value="CBG00135.1"/>
    <property type="gene ID" value="WBGene00023609"/>
</dbReference>
<dbReference type="GeneID" id="8587254"/>
<dbReference type="KEGG" id="cbr:CBG_00135"/>
<dbReference type="CTD" id="8587254"/>
<dbReference type="WormBase" id="CBG00135">
    <property type="protein sequence ID" value="CBP05663"/>
    <property type="gene ID" value="WBGene00023609"/>
</dbReference>
<dbReference type="eggNOG" id="KOG0036">
    <property type="taxonomic scope" value="Eukaryota"/>
</dbReference>
<dbReference type="HOGENOM" id="CLU_015166_2_0_1"/>
<dbReference type="InParanoid" id="Q628Z2"/>
<dbReference type="OMA" id="MFHSLDH"/>
<dbReference type="OrthoDB" id="270584at2759"/>
<dbReference type="Proteomes" id="UP000008549">
    <property type="component" value="Unassembled WGS sequence"/>
</dbReference>
<dbReference type="GO" id="GO:0005743">
    <property type="term" value="C:mitochondrial inner membrane"/>
    <property type="evidence" value="ECO:0007669"/>
    <property type="project" value="UniProtKB-SubCell"/>
</dbReference>
<dbReference type="GO" id="GO:0005347">
    <property type="term" value="F:ATP transmembrane transporter activity"/>
    <property type="evidence" value="ECO:0000318"/>
    <property type="project" value="GO_Central"/>
</dbReference>
<dbReference type="GO" id="GO:0005509">
    <property type="term" value="F:calcium ion binding"/>
    <property type="evidence" value="ECO:0007669"/>
    <property type="project" value="InterPro"/>
</dbReference>
<dbReference type="GO" id="GO:0015866">
    <property type="term" value="P:ADP transport"/>
    <property type="evidence" value="ECO:0000318"/>
    <property type="project" value="GO_Central"/>
</dbReference>
<dbReference type="GO" id="GO:0015867">
    <property type="term" value="P:ATP transport"/>
    <property type="evidence" value="ECO:0000318"/>
    <property type="project" value="GO_Central"/>
</dbReference>
<dbReference type="FunFam" id="1.10.238.10:FF:000369">
    <property type="entry name" value="Probable calcium-binding mitochondrial carrier CBG00135"/>
    <property type="match status" value="1"/>
</dbReference>
<dbReference type="FunFam" id="1.10.238.10:FF:000028">
    <property type="entry name" value="Putative calcium-binding mitochondrial carrier protein scamc-2"/>
    <property type="match status" value="1"/>
</dbReference>
<dbReference type="FunFam" id="1.50.40.10:FF:000003">
    <property type="entry name" value="Putative calcium-binding mitochondrial carrier protein scamc-2"/>
    <property type="match status" value="1"/>
</dbReference>
<dbReference type="Gene3D" id="1.10.238.10">
    <property type="entry name" value="EF-hand"/>
    <property type="match status" value="2"/>
</dbReference>
<dbReference type="Gene3D" id="1.50.40.10">
    <property type="entry name" value="Mitochondrial carrier domain"/>
    <property type="match status" value="1"/>
</dbReference>
<dbReference type="InterPro" id="IPR011992">
    <property type="entry name" value="EF-hand-dom_pair"/>
</dbReference>
<dbReference type="InterPro" id="IPR018247">
    <property type="entry name" value="EF_Hand_1_Ca_BS"/>
</dbReference>
<dbReference type="InterPro" id="IPR002048">
    <property type="entry name" value="EF_hand_dom"/>
</dbReference>
<dbReference type="InterPro" id="IPR002067">
    <property type="entry name" value="Mit_carrier"/>
</dbReference>
<dbReference type="InterPro" id="IPR018108">
    <property type="entry name" value="Mitochondrial_sb/sol_carrier"/>
</dbReference>
<dbReference type="InterPro" id="IPR023395">
    <property type="entry name" value="Mt_carrier_dom_sf"/>
</dbReference>
<dbReference type="PANTHER" id="PTHR24089">
    <property type="entry name" value="SOLUTE CARRIER FAMILY 25"/>
    <property type="match status" value="1"/>
</dbReference>
<dbReference type="Pfam" id="PF13499">
    <property type="entry name" value="EF-hand_7"/>
    <property type="match status" value="1"/>
</dbReference>
<dbReference type="Pfam" id="PF00153">
    <property type="entry name" value="Mito_carr"/>
    <property type="match status" value="3"/>
</dbReference>
<dbReference type="PRINTS" id="PR00926">
    <property type="entry name" value="MITOCARRIER"/>
</dbReference>
<dbReference type="SMART" id="SM00054">
    <property type="entry name" value="EFh"/>
    <property type="match status" value="3"/>
</dbReference>
<dbReference type="SUPFAM" id="SSF47473">
    <property type="entry name" value="EF-hand"/>
    <property type="match status" value="1"/>
</dbReference>
<dbReference type="SUPFAM" id="SSF103506">
    <property type="entry name" value="Mitochondrial carrier"/>
    <property type="match status" value="1"/>
</dbReference>
<dbReference type="PROSITE" id="PS00018">
    <property type="entry name" value="EF_HAND_1"/>
    <property type="match status" value="2"/>
</dbReference>
<dbReference type="PROSITE" id="PS50222">
    <property type="entry name" value="EF_HAND_2"/>
    <property type="match status" value="3"/>
</dbReference>
<dbReference type="PROSITE" id="PS50920">
    <property type="entry name" value="SOLCAR"/>
    <property type="match status" value="3"/>
</dbReference>
<keyword id="KW-0106">Calcium</keyword>
<keyword id="KW-0472">Membrane</keyword>
<keyword id="KW-0479">Metal-binding</keyword>
<keyword id="KW-0496">Mitochondrion</keyword>
<keyword id="KW-0999">Mitochondrion inner membrane</keyword>
<keyword id="KW-1185">Reference proteome</keyword>
<keyword id="KW-0677">Repeat</keyword>
<keyword id="KW-0812">Transmembrane</keyword>
<keyword id="KW-1133">Transmembrane helix</keyword>
<keyword id="KW-0813">Transport</keyword>
<feature type="chain" id="PRO_0000243923" description="Probable calcium-binding mitochondrial carrier CBG00135">
    <location>
        <begin position="1"/>
        <end position="532"/>
    </location>
</feature>
<feature type="transmembrane region" description="Helical; Name=1" evidence="2">
    <location>
        <begin position="249"/>
        <end position="266"/>
    </location>
</feature>
<feature type="transmembrane region" description="Helical; Name=2" evidence="2">
    <location>
        <begin position="304"/>
        <end position="323"/>
    </location>
</feature>
<feature type="transmembrane region" description="Helical; Name=3" evidence="2">
    <location>
        <begin position="349"/>
        <end position="362"/>
    </location>
</feature>
<feature type="transmembrane region" description="Helical; Name=4" evidence="2">
    <location>
        <begin position="400"/>
        <end position="419"/>
    </location>
</feature>
<feature type="transmembrane region" description="Helical; Name=5" evidence="2">
    <location>
        <begin position="442"/>
        <end position="459"/>
    </location>
</feature>
<feature type="transmembrane region" description="Helical; Name=6" evidence="2">
    <location>
        <begin position="501"/>
        <end position="518"/>
    </location>
</feature>
<feature type="domain" description="EF-hand 1" evidence="3">
    <location>
        <begin position="70"/>
        <end position="105"/>
    </location>
</feature>
<feature type="domain" description="EF-hand 2" evidence="4">
    <location>
        <begin position="107"/>
        <end position="136"/>
    </location>
</feature>
<feature type="domain" description="EF-hand 3" evidence="3">
    <location>
        <begin position="137"/>
        <end position="172"/>
    </location>
</feature>
<feature type="domain" description="EF-hand 4" evidence="3">
    <location>
        <begin position="173"/>
        <end position="208"/>
    </location>
</feature>
<feature type="repeat" description="Solcar 1">
    <location>
        <begin position="243"/>
        <end position="329"/>
    </location>
</feature>
<feature type="repeat" description="Solcar 2">
    <location>
        <begin position="339"/>
        <end position="425"/>
    </location>
</feature>
<feature type="repeat" description="Solcar 3">
    <location>
        <begin position="436"/>
        <end position="526"/>
    </location>
</feature>
<feature type="binding site" evidence="3">
    <location>
        <position position="83"/>
    </location>
    <ligand>
        <name>Ca(2+)</name>
        <dbReference type="ChEBI" id="CHEBI:29108"/>
        <label>1</label>
    </ligand>
</feature>
<feature type="binding site" evidence="3">
    <location>
        <position position="85"/>
    </location>
    <ligand>
        <name>Ca(2+)</name>
        <dbReference type="ChEBI" id="CHEBI:29108"/>
        <label>1</label>
    </ligand>
</feature>
<feature type="binding site" evidence="3">
    <location>
        <position position="87"/>
    </location>
    <ligand>
        <name>Ca(2+)</name>
        <dbReference type="ChEBI" id="CHEBI:29108"/>
        <label>1</label>
    </ligand>
</feature>
<feature type="binding site" evidence="3">
    <location>
        <position position="89"/>
    </location>
    <ligand>
        <name>Ca(2+)</name>
        <dbReference type="ChEBI" id="CHEBI:29108"/>
        <label>1</label>
    </ligand>
</feature>
<feature type="binding site" evidence="3">
    <location>
        <position position="94"/>
    </location>
    <ligand>
        <name>Ca(2+)</name>
        <dbReference type="ChEBI" id="CHEBI:29108"/>
        <label>1</label>
    </ligand>
</feature>
<feature type="binding site" evidence="3">
    <location>
        <position position="150"/>
    </location>
    <ligand>
        <name>Ca(2+)</name>
        <dbReference type="ChEBI" id="CHEBI:29108"/>
        <label>2</label>
    </ligand>
</feature>
<feature type="binding site" evidence="3">
    <location>
        <position position="152"/>
    </location>
    <ligand>
        <name>Ca(2+)</name>
        <dbReference type="ChEBI" id="CHEBI:29108"/>
        <label>2</label>
    </ligand>
</feature>
<feature type="binding site" evidence="3">
    <location>
        <position position="154"/>
    </location>
    <ligand>
        <name>Ca(2+)</name>
        <dbReference type="ChEBI" id="CHEBI:29108"/>
        <label>2</label>
    </ligand>
</feature>
<feature type="binding site" evidence="3">
    <location>
        <position position="156"/>
    </location>
    <ligand>
        <name>Ca(2+)</name>
        <dbReference type="ChEBI" id="CHEBI:29108"/>
        <label>2</label>
    </ligand>
</feature>
<feature type="binding site" evidence="3">
    <location>
        <position position="161"/>
    </location>
    <ligand>
        <name>Ca(2+)</name>
        <dbReference type="ChEBI" id="CHEBI:29108"/>
        <label>2</label>
    </ligand>
</feature>
<comment type="function">
    <text evidence="1">Calcium-dependent mitochondrial solute carrier.</text>
</comment>
<comment type="subcellular location">
    <subcellularLocation>
        <location evidence="1">Mitochondrion inner membrane</location>
        <topology evidence="1">Multi-pass membrane protein</topology>
    </subcellularLocation>
</comment>
<comment type="similarity">
    <text evidence="4">Belongs to the mitochondrial carrier (TC 2.A.29) family.</text>
</comment>
<gene>
    <name type="ORF">CBG00135</name>
</gene>
<reference key="1">
    <citation type="journal article" date="2003" name="PLoS Biol.">
        <title>The genome sequence of Caenorhabditis briggsae: a platform for comparative genomics.</title>
        <authorList>
            <person name="Stein L.D."/>
            <person name="Bao Z."/>
            <person name="Blasiar D."/>
            <person name="Blumenthal T."/>
            <person name="Brent M.R."/>
            <person name="Chen N."/>
            <person name="Chinwalla A."/>
            <person name="Clarke L."/>
            <person name="Clee C."/>
            <person name="Coghlan A."/>
            <person name="Coulson A."/>
            <person name="D'Eustachio P."/>
            <person name="Fitch D.H.A."/>
            <person name="Fulton L.A."/>
            <person name="Fulton R.E."/>
            <person name="Griffiths-Jones S."/>
            <person name="Harris T.W."/>
            <person name="Hillier L.W."/>
            <person name="Kamath R."/>
            <person name="Kuwabara P.E."/>
            <person name="Mardis E.R."/>
            <person name="Marra M.A."/>
            <person name="Miner T.L."/>
            <person name="Minx P."/>
            <person name="Mullikin J.C."/>
            <person name="Plumb R.W."/>
            <person name="Rogers J."/>
            <person name="Schein J.E."/>
            <person name="Sohrmann M."/>
            <person name="Spieth J."/>
            <person name="Stajich J.E."/>
            <person name="Wei C."/>
            <person name="Willey D."/>
            <person name="Wilson R.K."/>
            <person name="Durbin R.M."/>
            <person name="Waterston R.H."/>
        </authorList>
    </citation>
    <scope>NUCLEOTIDE SEQUENCE [LARGE SCALE GENOMIC DNA]</scope>
    <source>
        <strain>AF16</strain>
    </source>
</reference>
<sequence>MSVTVETPLQAGPLLKEKKQELIDIKNIQEHARTVQPFKASKHQPLISGSVSKEAAIATHAALHIDLTPEKEKKIREMYDRLDADNDGSIDIRDLTQALSSQTPHIPATMAPKLLAKMKREDSDRVTYADFTNYVIAHEARLAEVFDQIDSNRDGEVDVSEIKSYCKEMGVNLDDHKALSIVKKMDQSGSSSVNLNEFQDFMLLYPSTDMREMVDFWRHNLIIDIGEDGQVPEDFTPQELQSGVWWRHLVAGGVAGAMSRTCTAPFDRIKVYLQVNSTKTNKLGVVSCVHLLHAEGGLKSFWRGNGINVIKIAPESAMKFMSYDQIKRWIQEYKGGAELTTYERLFAGSSAGAISQTAIYPMEVMKTRLALRRTGQLDRGMIHFAHKMYDKEGIRCFYKGYLPNLLGIIPYAGIDLTVYETLKSCYTQYYTEHTEPGVLALLACGTCSSTCGQLASYPLALVRTRLQARAISPKNSSQPDTMIGQFKHILQNEGFTGLYRGITPNFMKVIPAVSISYVVYEKVRKQLGATMS</sequence>
<accession>Q628Z2</accession>
<accession>A8WMD0</accession>
<name>CMC3_CAEBR</name>
<organism>
    <name type="scientific">Caenorhabditis briggsae</name>
    <dbReference type="NCBI Taxonomy" id="6238"/>
    <lineage>
        <taxon>Eukaryota</taxon>
        <taxon>Metazoa</taxon>
        <taxon>Ecdysozoa</taxon>
        <taxon>Nematoda</taxon>
        <taxon>Chromadorea</taxon>
        <taxon>Rhabditida</taxon>
        <taxon>Rhabditina</taxon>
        <taxon>Rhabditomorpha</taxon>
        <taxon>Rhabditoidea</taxon>
        <taxon>Rhabditidae</taxon>
        <taxon>Peloderinae</taxon>
        <taxon>Caenorhabditis</taxon>
    </lineage>
</organism>
<evidence type="ECO:0000250" key="1"/>
<evidence type="ECO:0000255" key="2"/>
<evidence type="ECO:0000255" key="3">
    <source>
        <dbReference type="PROSITE-ProRule" id="PRU00448"/>
    </source>
</evidence>
<evidence type="ECO:0000305" key="4"/>